<name>FLGE_HELPJ</name>
<comment type="subcellular location">
    <subcellularLocation>
        <location evidence="1">Bacterial flagellum basal body</location>
    </subcellularLocation>
</comment>
<comment type="similarity">
    <text evidence="2">Belongs to the flagella basal body rod proteins family.</text>
</comment>
<evidence type="ECO:0000250" key="1"/>
<evidence type="ECO:0000305" key="2"/>
<dbReference type="EMBL" id="AE001439">
    <property type="protein sequence ID" value="AAD06366.1"/>
    <property type="molecule type" value="Genomic_DNA"/>
</dbReference>
<dbReference type="PIR" id="G71888">
    <property type="entry name" value="G71888"/>
</dbReference>
<dbReference type="RefSeq" id="WP_000946429.1">
    <property type="nucleotide sequence ID" value="NZ_CP011330.1"/>
</dbReference>
<dbReference type="SMR" id="Q9ZKY0"/>
<dbReference type="KEGG" id="hpj:jhp_0804"/>
<dbReference type="PATRIC" id="fig|85963.30.peg.168"/>
<dbReference type="eggNOG" id="COG1749">
    <property type="taxonomic scope" value="Bacteria"/>
</dbReference>
<dbReference type="Proteomes" id="UP000000804">
    <property type="component" value="Chromosome"/>
</dbReference>
<dbReference type="GO" id="GO:0009425">
    <property type="term" value="C:bacterial-type flagellum basal body"/>
    <property type="evidence" value="ECO:0007669"/>
    <property type="project" value="UniProtKB-SubCell"/>
</dbReference>
<dbReference type="GO" id="GO:0044781">
    <property type="term" value="P:bacterial-type flagellum organization"/>
    <property type="evidence" value="ECO:0007669"/>
    <property type="project" value="InterPro"/>
</dbReference>
<dbReference type="GO" id="GO:0071978">
    <property type="term" value="P:bacterial-type flagellum-dependent swarming motility"/>
    <property type="evidence" value="ECO:0007669"/>
    <property type="project" value="TreeGrafter"/>
</dbReference>
<dbReference type="FunFam" id="2.60.98.20:FF:000003">
    <property type="entry name" value="Flagellar hook protein FlgE"/>
    <property type="match status" value="1"/>
</dbReference>
<dbReference type="Gene3D" id="3.30.70.2120">
    <property type="match status" value="1"/>
</dbReference>
<dbReference type="Gene3D" id="2.60.98.20">
    <property type="entry name" value="Flagellar hook protein FlgE"/>
    <property type="match status" value="1"/>
</dbReference>
<dbReference type="InterPro" id="IPR037058">
    <property type="entry name" value="Falgellar_hook_FlgE_sf"/>
</dbReference>
<dbReference type="InterPro" id="IPR001444">
    <property type="entry name" value="Flag_bb_rod_N"/>
</dbReference>
<dbReference type="InterPro" id="IPR020013">
    <property type="entry name" value="Flagellar_FlgE/F/G"/>
</dbReference>
<dbReference type="InterPro" id="IPR010810">
    <property type="entry name" value="Flagellin_hook_IN_motif"/>
</dbReference>
<dbReference type="InterPro" id="IPR010930">
    <property type="entry name" value="Flg_bb/hook_C_dom"/>
</dbReference>
<dbReference type="InterPro" id="IPR037925">
    <property type="entry name" value="FlgE/F/G-like"/>
</dbReference>
<dbReference type="InterPro" id="IPR011491">
    <property type="entry name" value="FlgE_D2"/>
</dbReference>
<dbReference type="InterPro" id="IPR012835">
    <property type="entry name" value="FlgE_epsilon"/>
</dbReference>
<dbReference type="InterPro" id="IPR053967">
    <property type="entry name" value="LlgE_F_G-like_D1"/>
</dbReference>
<dbReference type="NCBIfam" id="TIGR02489">
    <property type="entry name" value="flgE_epsilon"/>
    <property type="match status" value="1"/>
</dbReference>
<dbReference type="NCBIfam" id="TIGR03506">
    <property type="entry name" value="FlgEFG_subfam"/>
    <property type="match status" value="2"/>
</dbReference>
<dbReference type="PANTHER" id="PTHR30435:SF19">
    <property type="entry name" value="FLAGELLAR BASAL-BODY ROD PROTEIN FLGG"/>
    <property type="match status" value="1"/>
</dbReference>
<dbReference type="PANTHER" id="PTHR30435">
    <property type="entry name" value="FLAGELLAR PROTEIN"/>
    <property type="match status" value="1"/>
</dbReference>
<dbReference type="Pfam" id="PF07196">
    <property type="entry name" value="Flagellin_IN"/>
    <property type="match status" value="1"/>
</dbReference>
<dbReference type="Pfam" id="PF00460">
    <property type="entry name" value="Flg_bb_rod"/>
    <property type="match status" value="1"/>
</dbReference>
<dbReference type="Pfam" id="PF06429">
    <property type="entry name" value="Flg_bbr_C"/>
    <property type="match status" value="1"/>
</dbReference>
<dbReference type="Pfam" id="PF07559">
    <property type="entry name" value="FlgE_D2"/>
    <property type="match status" value="1"/>
</dbReference>
<dbReference type="Pfam" id="PF22692">
    <property type="entry name" value="LlgE_F_G_D1"/>
    <property type="match status" value="1"/>
</dbReference>
<dbReference type="SUPFAM" id="SSF117143">
    <property type="entry name" value="Flagellar hook protein flgE"/>
    <property type="match status" value="2"/>
</dbReference>
<proteinExistence type="inferred from homology"/>
<accession>Q9ZKY0</accession>
<sequence>MLRSLWSGVNGMQAHQIALDIESNNIANVNTTGFKYSRASFVDMLSQVKLIATAPYKNGLAGQNDFSVGLGVGVDATTKIFSQGNIQNTDVKTDLAIQGDGFFIISPDRGITRNFTRDGEFLFDSQGSLVTTGGLVVQGWVRNGSDTGNKGSDTDALKVDNTGPLENIRIDPGMVMPARASNRISMRANLNAGRHADQTAAVFALDSSAKTPSDGINPVYDSGTNLAQVAEDMGSLYNEDGDALLLNENQGIWVSYKSAKMVKDILPSAENSTLELNGVKISFTNDSAVSRTSSLVAAKNAINAVKSQTGIEAYLDGKQLRLENTNELDGDEKLKNIVVTQAGTGAFANFLDGDKDVTAFKYSYTHSISPNADIGQFRTTEDLRALIQHDANIVKDPSLADNYQDSAASIGVTINQYGMFEINNKDNKNVIKENLNIFVSGYSSDSVTNNVLFKNAMKGLNTASLIEGGASASSSKFTHATHATSIDVIDSLGTKHAMRIEFYRSGGAEWNFRVIVPEPGELVGGSAARPNVFEGGRLHFNNDGSLAGMNPPLLQFDPKNGADAPQRINLAFGSSGSFDGLTSVDKISETYAIEQNGYQAGDLMDVRFDSDGVLLGAFSNGRTLALAQVALANFANDAGLQALGGNVFSQTGNSGQALIGAANTGRRGSISGSKLESSNVDLSRSLTNLIVVQRGFQANSKAVTTSDQILNTLLNLKQ</sequence>
<organism>
    <name type="scientific">Helicobacter pylori (strain J99 / ATCC 700824)</name>
    <name type="common">Campylobacter pylori J99</name>
    <dbReference type="NCBI Taxonomy" id="85963"/>
    <lineage>
        <taxon>Bacteria</taxon>
        <taxon>Pseudomonadati</taxon>
        <taxon>Campylobacterota</taxon>
        <taxon>Epsilonproteobacteria</taxon>
        <taxon>Campylobacterales</taxon>
        <taxon>Helicobacteraceae</taxon>
        <taxon>Helicobacter</taxon>
    </lineage>
</organism>
<gene>
    <name type="primary">flgE</name>
    <name type="ordered locus">jhp_0804</name>
</gene>
<protein>
    <recommendedName>
        <fullName>Flagellar hook protein FlgE</fullName>
    </recommendedName>
</protein>
<keyword id="KW-0975">Bacterial flagellum</keyword>
<feature type="chain" id="PRO_0000180829" description="Flagellar hook protein FlgE">
    <location>
        <begin position="1"/>
        <end position="718"/>
    </location>
</feature>
<reference key="1">
    <citation type="journal article" date="1999" name="Nature">
        <title>Genomic sequence comparison of two unrelated isolates of the human gastric pathogen Helicobacter pylori.</title>
        <authorList>
            <person name="Alm R.A."/>
            <person name="Ling L.-S.L."/>
            <person name="Moir D.T."/>
            <person name="King B.L."/>
            <person name="Brown E.D."/>
            <person name="Doig P.C."/>
            <person name="Smith D.R."/>
            <person name="Noonan B."/>
            <person name="Guild B.C."/>
            <person name="deJonge B.L."/>
            <person name="Carmel G."/>
            <person name="Tummino P.J."/>
            <person name="Caruso A."/>
            <person name="Uria-Nickelsen M."/>
            <person name="Mills D.M."/>
            <person name="Ives C."/>
            <person name="Gibson R."/>
            <person name="Merberg D."/>
            <person name="Mills S.D."/>
            <person name="Jiang Q."/>
            <person name="Taylor D.E."/>
            <person name="Vovis G.F."/>
            <person name="Trust T.J."/>
        </authorList>
    </citation>
    <scope>NUCLEOTIDE SEQUENCE [LARGE SCALE GENOMIC DNA]</scope>
    <source>
        <strain>J99 / ATCC 700824</strain>
    </source>
</reference>